<reference evidence="3" key="1">
    <citation type="journal article" date="2000" name="Nature">
        <title>The complete sequence of the mucosal pathogen Ureaplasma urealyticum.</title>
        <authorList>
            <person name="Glass J.I."/>
            <person name="Lefkowitz E.J."/>
            <person name="Glass J.S."/>
            <person name="Heiner C.R."/>
            <person name="Chen E.Y."/>
            <person name="Cassell G.H."/>
        </authorList>
    </citation>
    <scope>NUCLEOTIDE SEQUENCE [LARGE SCALE GENOMIC DNA]</scope>
    <source>
        <strain>ATCC 700970</strain>
    </source>
</reference>
<reference evidence="2 4" key="2">
    <citation type="journal article" date="2011" name="J. Struct. Funct. Genomics">
        <title>Solution NMR and X-ray crystal structures of membrane-associated Lipoprotein-17 domain reveal a novel fold.</title>
        <authorList>
            <consortium name="Northeast structural genomics consortium (NESG)"/>
            <person name="Mani R."/>
            <person name="Vorobiev S."/>
            <person name="Swapna G.V."/>
            <person name="Neely H."/>
            <person name="Janjua H."/>
            <person name="Ciccosanti C."/>
            <person name="Xiao R."/>
            <person name="Acton T.B."/>
            <person name="Everett J.K."/>
            <person name="Hunt J."/>
            <person name="Montelione G.T."/>
        </authorList>
    </citation>
    <scope>STRUCTURE BY NMR OF 128-239</scope>
    <scope>X-RAY CRYSTALLOGRAPHY (2.49 ANGSTROMS) OF 133-249</scope>
</reference>
<evidence type="ECO:0000255" key="1">
    <source>
        <dbReference type="PROSITE-ProRule" id="PRU00303"/>
    </source>
</evidence>
<evidence type="ECO:0000305" key="2"/>
<evidence type="ECO:0000312" key="3">
    <source>
        <dbReference type="EMBL" id="AAF30450.1"/>
    </source>
</evidence>
<evidence type="ECO:0000312" key="4">
    <source>
        <dbReference type="PDB" id="3K63"/>
    </source>
</evidence>
<evidence type="ECO:0007829" key="5">
    <source>
        <dbReference type="PDB" id="2KRT"/>
    </source>
</evidence>
<evidence type="ECO:0007829" key="6">
    <source>
        <dbReference type="PDB" id="3K63"/>
    </source>
</evidence>
<name>MALP_UREPA</name>
<dbReference type="EMBL" id="AF222894">
    <property type="protein sequence ID" value="AAF30450.1"/>
    <property type="molecule type" value="Genomic_DNA"/>
</dbReference>
<dbReference type="RefSeq" id="WP_006688743.1">
    <property type="nucleotide sequence ID" value="NC_002162.1"/>
</dbReference>
<dbReference type="PDB" id="2KRT">
    <property type="method" value="NMR"/>
    <property type="chains" value="A=128-239"/>
</dbReference>
<dbReference type="PDB" id="3JVC">
    <property type="method" value="X-ray"/>
    <property type="resolution" value="2.69 A"/>
    <property type="chains" value="A/B/C=133-249"/>
</dbReference>
<dbReference type="PDB" id="3K63">
    <property type="method" value="X-ray"/>
    <property type="resolution" value="2.49 A"/>
    <property type="chains" value="A=133-249"/>
</dbReference>
<dbReference type="PDBsum" id="2KRT"/>
<dbReference type="PDBsum" id="3JVC"/>
<dbReference type="PDBsum" id="3K63"/>
<dbReference type="BMRB" id="Q9PRA0"/>
<dbReference type="SMR" id="Q9PRA0"/>
<dbReference type="STRING" id="273119.UU045"/>
<dbReference type="EnsemblBacteria" id="AAF30450">
    <property type="protein sequence ID" value="AAF30450"/>
    <property type="gene ID" value="UU045"/>
</dbReference>
<dbReference type="GeneID" id="29672285"/>
<dbReference type="KEGG" id="uur:UU045"/>
<dbReference type="eggNOG" id="ENOG5033SXH">
    <property type="taxonomic scope" value="Bacteria"/>
</dbReference>
<dbReference type="HOGENOM" id="CLU_015669_0_0_14"/>
<dbReference type="OrthoDB" id="393864at2"/>
<dbReference type="EvolutionaryTrace" id="Q9PRA0"/>
<dbReference type="Proteomes" id="UP000000423">
    <property type="component" value="Chromosome"/>
</dbReference>
<dbReference type="GO" id="GO:0005886">
    <property type="term" value="C:plasma membrane"/>
    <property type="evidence" value="ECO:0007669"/>
    <property type="project" value="UniProtKB-SubCell"/>
</dbReference>
<dbReference type="Gene3D" id="3.10.450.270">
    <property type="match status" value="1"/>
</dbReference>
<dbReference type="InterPro" id="IPR007326">
    <property type="entry name" value="Lipoprotein-assoc_dom"/>
</dbReference>
<dbReference type="InterPro" id="IPR022382">
    <property type="entry name" value="Mycoplasma_peptidase_DUF31"/>
</dbReference>
<dbReference type="InterPro" id="IPR022381">
    <property type="entry name" value="Uncharacterised_MG067"/>
</dbReference>
<dbReference type="NCBIfam" id="NF045841">
    <property type="entry name" value="Ig_SerProt_MIP"/>
    <property type="match status" value="1"/>
</dbReference>
<dbReference type="NCBIfam" id="NF045842">
    <property type="entry name" value="MIP_near_MIB"/>
    <property type="match status" value="1"/>
</dbReference>
<dbReference type="Pfam" id="PF04200">
    <property type="entry name" value="Lipoprotein_17"/>
    <property type="match status" value="2"/>
</dbReference>
<dbReference type="Pfam" id="PF01732">
    <property type="entry name" value="Mycop_pep_DUF31"/>
    <property type="match status" value="1"/>
</dbReference>
<dbReference type="PRINTS" id="PR00840">
    <property type="entry name" value="Y06768FAMILY"/>
</dbReference>
<dbReference type="PROSITE" id="PS51257">
    <property type="entry name" value="PROKAR_LIPOPROTEIN"/>
    <property type="match status" value="1"/>
</dbReference>
<keyword id="KW-0002">3D-structure</keyword>
<keyword id="KW-1003">Cell membrane</keyword>
<keyword id="KW-0449">Lipoprotein</keyword>
<keyword id="KW-0472">Membrane</keyword>
<keyword id="KW-0564">Palmitate</keyword>
<keyword id="KW-1185">Reference proteome</keyword>
<keyword id="KW-0732">Signal</keyword>
<gene>
    <name type="ordered locus">UU045</name>
</gene>
<proteinExistence type="evidence at protein level"/>
<accession>Q9PRA0</accession>
<feature type="signal peptide" evidence="1">
    <location>
        <begin position="1"/>
        <end position="25"/>
    </location>
</feature>
<feature type="chain" id="PRO_0000413662" description="Membrane-associated lipoprotein">
    <location>
        <begin position="26"/>
        <end position="834"/>
    </location>
</feature>
<feature type="domain" description="Lipoprotein-associated type-17">
    <location>
        <begin position="143"/>
        <end position="237"/>
    </location>
</feature>
<feature type="lipid moiety-binding region" description="N-palmitoyl cysteine" evidence="1">
    <location>
        <position position="26"/>
    </location>
</feature>
<feature type="lipid moiety-binding region" description="S-diacylglycerol cysteine" evidence="1">
    <location>
        <position position="26"/>
    </location>
</feature>
<feature type="helix" evidence="6">
    <location>
        <begin position="135"/>
        <end position="138"/>
    </location>
</feature>
<feature type="helix" evidence="6">
    <location>
        <begin position="139"/>
        <end position="141"/>
    </location>
</feature>
<feature type="turn" evidence="6">
    <location>
        <begin position="144"/>
        <end position="146"/>
    </location>
</feature>
<feature type="strand" evidence="6">
    <location>
        <begin position="147"/>
        <end position="152"/>
    </location>
</feature>
<feature type="helix" evidence="6">
    <location>
        <begin position="160"/>
        <end position="162"/>
    </location>
</feature>
<feature type="helix" evidence="6">
    <location>
        <begin position="165"/>
        <end position="171"/>
    </location>
</feature>
<feature type="helix" evidence="6">
    <location>
        <begin position="172"/>
        <end position="174"/>
    </location>
</feature>
<feature type="strand" evidence="6">
    <location>
        <begin position="176"/>
        <end position="180"/>
    </location>
</feature>
<feature type="turn" evidence="6">
    <location>
        <begin position="184"/>
        <end position="186"/>
    </location>
</feature>
<feature type="strand" evidence="6">
    <location>
        <begin position="187"/>
        <end position="195"/>
    </location>
</feature>
<feature type="strand" evidence="5">
    <location>
        <begin position="197"/>
        <end position="199"/>
    </location>
</feature>
<feature type="helix" evidence="6">
    <location>
        <begin position="201"/>
        <end position="207"/>
    </location>
</feature>
<feature type="strand" evidence="6">
    <location>
        <begin position="210"/>
        <end position="218"/>
    </location>
</feature>
<feature type="turn" evidence="6">
    <location>
        <begin position="219"/>
        <end position="221"/>
    </location>
</feature>
<feature type="strand" evidence="6">
    <location>
        <begin position="224"/>
        <end position="231"/>
    </location>
</feature>
<sequence length="834" mass="95985">MKKNKLTTLALILPITILTPIVIASCTNKTKVKKSSSLDKIASNLKLEYFNNKANTKASSVQKDEIKKPLNLPNDVVFSVKDVFVSHKDQSVLIVKYTLKKGNEIQEYTYEIKGFKSVYEKDKIVNDLSQANEDFKKIVNNIRLKDTFDFKLAAFPNQNYDQLLPSQIYKNYYQGIEIQQHKYQNELDIKIINFLYPDGDFGSANKNGTLKLSLMLTDKKNNQVYYKLLEVSGFKSNPYGVDENGTIPGIGTERLKPKNQDDYFSKTQLQRYEIDNEGYLQILKRQNNDKNWKELRPDLNATVSDIKHFDEKAKNVGQDSYESAAYKGFTLPVYESDGKISGLALAGKDTPKGPSWVDAIGRNQWQIGGLPRTLPNEKYRQEAMQTFSLGILNNDSHKNNTYNKTAGTTWILDYQKTSDNKYPTKWYFATNLHVADAINENTLSINLMRLMDSAQIKTTFRLSNLDENIYNFGFRSKEHGKNLLNHGLKKIFDGRDFLKTKPAEYLINSQKEKYKDVGNFTDFAVFELDFEKLELVNVWKNFLGENNGLVTKYNNYNPQELAKVITSNYANNKNNQIKFLSKSYLSDYSKIDVPLKYRQEDAKTWFKKYDELFALGWPNSTEDFFFKAYVDDDQLKYRTRDNFSLWTNSDYRFFNNLTQQEGGQPAFPPERTERGNYLSYAIGFRSFIQKPGIVDAFIAVPQIGNNLYTSSDNKKYINMGLEYLPKHFAPAGGASGTSVRNQKNELVAIYHAKYDSSKTGLAAAFRSEGYDYQGLYGNYNLPQYDLIYGGGKDQTEKKSYREAMKDIYQNNNIKTALFPDGFDKIPDEFKFNNN</sequence>
<protein>
    <recommendedName>
        <fullName>Membrane-associated lipoprotein</fullName>
    </recommendedName>
</protein>
<comment type="subcellular location">
    <subcellularLocation>
        <location evidence="1">Cell membrane</location>
        <topology evidence="1">Lipid-anchor</topology>
    </subcellularLocation>
</comment>
<organism>
    <name type="scientific">Ureaplasma parvum serovar 3 (strain ATCC 700970)</name>
    <dbReference type="NCBI Taxonomy" id="273119"/>
    <lineage>
        <taxon>Bacteria</taxon>
        <taxon>Bacillati</taxon>
        <taxon>Mycoplasmatota</taxon>
        <taxon>Mycoplasmoidales</taxon>
        <taxon>Mycoplasmoidaceae</taxon>
        <taxon>Ureaplasma</taxon>
    </lineage>
</organism>